<sequence length="394" mass="44265">DDFKDLGFIDKQKAHVKEAVSKLTARSDSSLAGFVLDMFCTSMIDVAKELGVPYYIFFTSGAAFLGFLFYVQLIHDEQDADLTQFKDSDAELSVPSLANSLPARVLPASMLVKDRFYAFIRIIRGLREAKGIMVNTFMELESHALNSLKDDQSKIPPIYPVGPILKLSNQENDVGPEGSEIIEWLDDQPPSSVVFLCFGSMGGFDMDQAKEIACALEQSRHRFLWSLRRPPPKGKIETSTDYENLQEILPVGFSERTAGMGKVVGWAPQVAILEHPAIGGFVSHCGWNSILESIWFSVPIATWPLYAEQQFNAFTMVTELGLAVEIKMDYKKESEIILSADDIERGIKCVMEHHSEIRKRVKEMSDKSRKALMDDESSSFWLDRLIEDVINNLS</sequence>
<keyword id="KW-0328">Glycosyltransferase</keyword>
<keyword id="KW-0808">Transferase</keyword>
<gene>
    <name type="primary">GT6</name>
    <name type="synonym">UGT73A6</name>
</gene>
<accession>Q40288</accession>
<comment type="function">
    <text evidence="1">In the presence of other necessary color factors, this glycosylation reaction allows the accumulation of anthocyanin pigments (By similarity). May be involved in glycosylation of unstable cyanohydrins to produce stable cyanoglucosides.</text>
</comment>
<comment type="catalytic activity">
    <reaction>
        <text>an anthocyanidin + UDP-alpha-D-glucose + H(+) = an anthocyanidin 3-O-beta-D-glucoside + UDP</text>
        <dbReference type="Rhea" id="RHEA:20093"/>
        <dbReference type="ChEBI" id="CHEBI:15378"/>
        <dbReference type="ChEBI" id="CHEBI:16307"/>
        <dbReference type="ChEBI" id="CHEBI:58223"/>
        <dbReference type="ChEBI" id="CHEBI:58885"/>
        <dbReference type="ChEBI" id="CHEBI:143576"/>
        <dbReference type="EC" id="2.4.1.115"/>
    </reaction>
</comment>
<comment type="pathway">
    <text>Pigment biosynthesis; anthocyanin biosynthesis.</text>
</comment>
<comment type="tissue specificity">
    <text>Expressed in cotyledons and leaves.</text>
</comment>
<comment type="developmental stage">
    <text>Expressed primarily in developing cotyledons (from emerging green cotyledons to approximately 10 days old); very low levels in hypocotyls and no measurable expression in roots.</text>
</comment>
<comment type="similarity">
    <text evidence="4">Belongs to the UDP-glycosyltransferase family.</text>
</comment>
<dbReference type="EC" id="2.4.1.115"/>
<dbReference type="EMBL" id="X77463">
    <property type="protein sequence ID" value="CAA54613.1"/>
    <property type="molecule type" value="mRNA"/>
</dbReference>
<dbReference type="PIR" id="S41952">
    <property type="entry name" value="S41952"/>
</dbReference>
<dbReference type="SMR" id="Q40288"/>
<dbReference type="CAZy" id="GT1">
    <property type="family name" value="Glycosyltransferase Family 1"/>
</dbReference>
<dbReference type="UniPathway" id="UPA00009"/>
<dbReference type="GO" id="GO:0047213">
    <property type="term" value="F:anthocyanidin 3-O-glucosyltransferase activity"/>
    <property type="evidence" value="ECO:0007669"/>
    <property type="project" value="UniProtKB-EC"/>
</dbReference>
<dbReference type="GO" id="GO:0009718">
    <property type="term" value="P:anthocyanin-containing compound biosynthetic process"/>
    <property type="evidence" value="ECO:0007669"/>
    <property type="project" value="UniProtKB-UniPathway"/>
</dbReference>
<dbReference type="CDD" id="cd03784">
    <property type="entry name" value="GT1_Gtf-like"/>
    <property type="match status" value="1"/>
</dbReference>
<dbReference type="FunFam" id="3.40.50.2000:FF:000056">
    <property type="entry name" value="Glycosyltransferase"/>
    <property type="match status" value="1"/>
</dbReference>
<dbReference type="Gene3D" id="3.40.50.2000">
    <property type="entry name" value="Glycogen Phosphorylase B"/>
    <property type="match status" value="2"/>
</dbReference>
<dbReference type="InterPro" id="IPR050481">
    <property type="entry name" value="UDP-glycosyltransf_plant"/>
</dbReference>
<dbReference type="InterPro" id="IPR002213">
    <property type="entry name" value="UDP_glucos_trans"/>
</dbReference>
<dbReference type="InterPro" id="IPR035595">
    <property type="entry name" value="UDP_glycos_trans_CS"/>
</dbReference>
<dbReference type="PANTHER" id="PTHR48048">
    <property type="entry name" value="GLYCOSYLTRANSFERASE"/>
    <property type="match status" value="1"/>
</dbReference>
<dbReference type="PANTHER" id="PTHR48048:SF45">
    <property type="entry name" value="GLYCOSYLTRANSFERASE"/>
    <property type="match status" value="1"/>
</dbReference>
<dbReference type="Pfam" id="PF00201">
    <property type="entry name" value="UDPGT"/>
    <property type="match status" value="1"/>
</dbReference>
<dbReference type="SUPFAM" id="SSF53756">
    <property type="entry name" value="UDP-Glycosyltransferase/glycogen phosphorylase"/>
    <property type="match status" value="1"/>
</dbReference>
<dbReference type="PROSITE" id="PS00375">
    <property type="entry name" value="UDPGT"/>
    <property type="match status" value="1"/>
</dbReference>
<organism>
    <name type="scientific">Manihot esculenta</name>
    <name type="common">Cassava</name>
    <name type="synonym">Jatropha manihot</name>
    <dbReference type="NCBI Taxonomy" id="3983"/>
    <lineage>
        <taxon>Eukaryota</taxon>
        <taxon>Viridiplantae</taxon>
        <taxon>Streptophyta</taxon>
        <taxon>Embryophyta</taxon>
        <taxon>Tracheophyta</taxon>
        <taxon>Spermatophyta</taxon>
        <taxon>Magnoliopsida</taxon>
        <taxon>eudicotyledons</taxon>
        <taxon>Gunneridae</taxon>
        <taxon>Pentapetalae</taxon>
        <taxon>rosids</taxon>
        <taxon>fabids</taxon>
        <taxon>Malpighiales</taxon>
        <taxon>Euphorbiaceae</taxon>
        <taxon>Crotonoideae</taxon>
        <taxon>Manihoteae</taxon>
        <taxon>Manihot</taxon>
    </lineage>
</organism>
<reference key="1">
    <citation type="journal article" date="1994" name="DNA Seq.">
        <title>Multiple secondary plant product UDP-glucose glucosyltransferase genes expressed in cassava (Manihot esculenta Crantz) cotyledons.</title>
        <authorList>
            <person name="Hughes J."/>
            <person name="Hughes M.A."/>
        </authorList>
    </citation>
    <scope>NUCLEOTIDE SEQUENCE [MRNA]</scope>
    <source>
        <tissue>Cotyledon</tissue>
    </source>
</reference>
<feature type="chain" id="PRO_0000074147" description="Anthocyanidin 3-O-glucosyltransferase 6">
    <location>
        <begin position="1" status="less than"/>
        <end position="394"/>
    </location>
</feature>
<feature type="active site" description="Charge relay" evidence="2">
    <location>
        <position position="37"/>
    </location>
</feature>
<feature type="binding site" evidence="2">
    <location>
        <position position="59"/>
    </location>
    <ligand>
        <name>UDP-alpha-D-glucose</name>
        <dbReference type="ChEBI" id="CHEBI:58885"/>
    </ligand>
</feature>
<feature type="binding site" evidence="2">
    <location>
        <position position="267"/>
    </location>
    <ligand>
        <name>UDP-alpha-D-glucose</name>
        <dbReference type="ChEBI" id="CHEBI:58885"/>
    </ligand>
</feature>
<feature type="binding site" evidence="2">
    <location>
        <position position="269"/>
    </location>
    <ligand>
        <name>UDP-alpha-D-glucose</name>
        <dbReference type="ChEBI" id="CHEBI:58885"/>
    </ligand>
</feature>
<feature type="binding site" evidence="2">
    <location>
        <position position="284"/>
    </location>
    <ligand>
        <name>UDP-alpha-D-glucose</name>
        <dbReference type="ChEBI" id="CHEBI:58885"/>
    </ligand>
</feature>
<feature type="binding site" evidence="2">
    <location>
        <position position="287"/>
    </location>
    <ligand>
        <name>UDP-alpha-D-glucose</name>
        <dbReference type="ChEBI" id="CHEBI:58885"/>
    </ligand>
</feature>
<feature type="binding site" evidence="2">
    <location>
        <position position="288"/>
    </location>
    <ligand>
        <name>UDP-alpha-D-glucose</name>
        <dbReference type="ChEBI" id="CHEBI:58885"/>
    </ligand>
</feature>
<feature type="binding site" evidence="2">
    <location>
        <position position="289"/>
    </location>
    <ligand>
        <name>UDP-alpha-D-glucose</name>
        <dbReference type="ChEBI" id="CHEBI:58885"/>
    </ligand>
</feature>
<feature type="binding site" evidence="2">
    <location>
        <position position="292"/>
    </location>
    <ligand>
        <name>UDP-alpha-D-glucose</name>
        <dbReference type="ChEBI" id="CHEBI:58885"/>
    </ligand>
</feature>
<feature type="binding site" evidence="3">
    <location>
        <position position="307"/>
    </location>
    <ligand>
        <name>an anthocyanidin</name>
        <dbReference type="ChEBI" id="CHEBI:143576"/>
    </ligand>
</feature>
<feature type="binding site" evidence="2">
    <location>
        <position position="308"/>
    </location>
    <ligand>
        <name>UDP-alpha-D-glucose</name>
        <dbReference type="ChEBI" id="CHEBI:58885"/>
    </ligand>
</feature>
<feature type="binding site" evidence="2">
    <location>
        <position position="309"/>
    </location>
    <ligand>
        <name>UDP-alpha-D-glucose</name>
        <dbReference type="ChEBI" id="CHEBI:58885"/>
    </ligand>
</feature>
<feature type="non-terminal residue">
    <location>
        <position position="1"/>
    </location>
</feature>
<name>UFOG6_MANES</name>
<protein>
    <recommendedName>
        <fullName>Anthocyanidin 3-O-glucosyltransferase 6</fullName>
        <ecNumber>2.4.1.115</ecNumber>
    </recommendedName>
    <alternativeName>
        <fullName>Flavonol 3-O-glucosyltransferase 6</fullName>
    </alternativeName>
    <alternativeName>
        <fullName>UDP-glucose flavonoid 3-O-glucosyltransferase 6</fullName>
    </alternativeName>
</protein>
<proteinExistence type="evidence at transcript level"/>
<evidence type="ECO:0000250" key="1"/>
<evidence type="ECO:0000250" key="2">
    <source>
        <dbReference type="UniProtKB" id="A0A0A1HA03"/>
    </source>
</evidence>
<evidence type="ECO:0000250" key="3">
    <source>
        <dbReference type="UniProtKB" id="P51094"/>
    </source>
</evidence>
<evidence type="ECO:0000305" key="4"/>